<sequence>MFESKINPLWQSFILAVQEEVKPALGCTEPISLALAAAAAAAELDGTVERIDAWVSPNLMKNGMGVTVPGTGMVGLPIAAALGALGGDAKAGLEVLKDASAKAVADAKAMLAAGHVAVMLQEPCNDILFSRAKVYSGDSWACVTIVGDHTNIVRIETNKGVVFTQADNAQEEEKNSPLGVLSHTSLEEILAFVNAVPFDAIRFILDAARLNGALSQEGLRGSWGLHIGSTLAKQCDRGLLAKDLSTAILIRTSAASDARMGGATLPAMSNSGSGNQGITATVPVMVVAEHVGADDERLARALMLSHLSAIYIHHQLPRLSALCAATTAAMGAAAGMAWLIDGRYDTIAMAISSMIGDVSGMICDGASNSCAMKVSTSASAAWKAVLMALDDTAVTGNEGIVAHNVEQSIANLCSLACRSMQQTDKQIIEIMASKAH</sequence>
<proteinExistence type="inferred from homology"/>
<accession>B5FHX2</accession>
<feature type="chain" id="PRO_1000188464" description="UPF0597 protein YhaM">
    <location>
        <begin position="1"/>
        <end position="436"/>
    </location>
</feature>
<reference key="1">
    <citation type="journal article" date="2011" name="J. Bacteriol.">
        <title>Comparative genomics of 28 Salmonella enterica isolates: evidence for CRISPR-mediated adaptive sublineage evolution.</title>
        <authorList>
            <person name="Fricke W.F."/>
            <person name="Mammel M.K."/>
            <person name="McDermott P.F."/>
            <person name="Tartera C."/>
            <person name="White D.G."/>
            <person name="Leclerc J.E."/>
            <person name="Ravel J."/>
            <person name="Cebula T.A."/>
        </authorList>
    </citation>
    <scope>NUCLEOTIDE SEQUENCE [LARGE SCALE GENOMIC DNA]</scope>
    <source>
        <strain>CT_02021853</strain>
    </source>
</reference>
<comment type="similarity">
    <text evidence="1">Belongs to the UPF0597 family.</text>
</comment>
<protein>
    <recommendedName>
        <fullName evidence="1">UPF0597 protein YhaM</fullName>
    </recommendedName>
</protein>
<gene>
    <name evidence="1" type="primary">yhaM</name>
    <name type="ordered locus">SeD_A3596</name>
</gene>
<organism>
    <name type="scientific">Salmonella dublin (strain CT_02021853)</name>
    <dbReference type="NCBI Taxonomy" id="439851"/>
    <lineage>
        <taxon>Bacteria</taxon>
        <taxon>Pseudomonadati</taxon>
        <taxon>Pseudomonadota</taxon>
        <taxon>Gammaproteobacteria</taxon>
        <taxon>Enterobacterales</taxon>
        <taxon>Enterobacteriaceae</taxon>
        <taxon>Salmonella</taxon>
    </lineage>
</organism>
<dbReference type="EMBL" id="CP001144">
    <property type="protein sequence ID" value="ACH76304.1"/>
    <property type="molecule type" value="Genomic_DNA"/>
</dbReference>
<dbReference type="RefSeq" id="WP_000463074.1">
    <property type="nucleotide sequence ID" value="NC_011205.1"/>
</dbReference>
<dbReference type="SMR" id="B5FHX2"/>
<dbReference type="KEGG" id="sed:SeD_A3596"/>
<dbReference type="HOGENOM" id="CLU_051840_0_0_6"/>
<dbReference type="Proteomes" id="UP000008322">
    <property type="component" value="Chromosome"/>
</dbReference>
<dbReference type="GO" id="GO:0080146">
    <property type="term" value="F:L-cysteine desulfhydrase activity"/>
    <property type="evidence" value="ECO:0007669"/>
    <property type="project" value="TreeGrafter"/>
</dbReference>
<dbReference type="GO" id="GO:0019450">
    <property type="term" value="P:L-cysteine catabolic process to pyruvate"/>
    <property type="evidence" value="ECO:0007669"/>
    <property type="project" value="TreeGrafter"/>
</dbReference>
<dbReference type="HAMAP" id="MF_01845">
    <property type="entry name" value="UPF0597"/>
    <property type="match status" value="1"/>
</dbReference>
<dbReference type="InterPro" id="IPR005130">
    <property type="entry name" value="Ser_deHydtase-like_asu"/>
</dbReference>
<dbReference type="InterPro" id="IPR021144">
    <property type="entry name" value="UPF0597"/>
</dbReference>
<dbReference type="PANTHER" id="PTHR30501">
    <property type="entry name" value="UPF0597 PROTEIN YHAM"/>
    <property type="match status" value="1"/>
</dbReference>
<dbReference type="PANTHER" id="PTHR30501:SF2">
    <property type="entry name" value="UPF0597 PROTEIN YHAM"/>
    <property type="match status" value="1"/>
</dbReference>
<dbReference type="Pfam" id="PF03313">
    <property type="entry name" value="SDH_alpha"/>
    <property type="match status" value="1"/>
</dbReference>
<dbReference type="PIRSF" id="PIRSF006054">
    <property type="entry name" value="UCP006054"/>
    <property type="match status" value="1"/>
</dbReference>
<evidence type="ECO:0000255" key="1">
    <source>
        <dbReference type="HAMAP-Rule" id="MF_01845"/>
    </source>
</evidence>
<name>YHAM_SALDC</name>